<protein>
    <recommendedName>
        <fullName evidence="1">Endoribonuclease YbeY</fullName>
        <ecNumber evidence="1">3.1.-.-</ecNumber>
    </recommendedName>
</protein>
<reference key="1">
    <citation type="submission" date="2009-02" db="EMBL/GenBank/DDBJ databases">
        <title>Genome sequence of Bacillus cereus 03BB102.</title>
        <authorList>
            <person name="Dodson R.J."/>
            <person name="Jackson P."/>
            <person name="Munk A.C."/>
            <person name="Brettin T."/>
            <person name="Bruce D."/>
            <person name="Detter C."/>
            <person name="Tapia R."/>
            <person name="Han C."/>
            <person name="Sutton G."/>
            <person name="Sims D."/>
        </authorList>
    </citation>
    <scope>NUCLEOTIDE SEQUENCE [LARGE SCALE GENOMIC DNA]</scope>
    <source>
        <strain>03BB102</strain>
    </source>
</reference>
<gene>
    <name evidence="1" type="primary">ybeY</name>
    <name type="ordered locus">BCA_4414</name>
</gene>
<proteinExistence type="inferred from homology"/>
<dbReference type="EC" id="3.1.-.-" evidence="1"/>
<dbReference type="EMBL" id="CP001407">
    <property type="protein sequence ID" value="ACO27761.1"/>
    <property type="molecule type" value="Genomic_DNA"/>
</dbReference>
<dbReference type="RefSeq" id="WP_000054692.1">
    <property type="nucleotide sequence ID" value="NZ_CP009318.1"/>
</dbReference>
<dbReference type="SMR" id="C1ESJ7"/>
<dbReference type="GeneID" id="93006797"/>
<dbReference type="KEGG" id="bcx:BCA_4414"/>
<dbReference type="PATRIC" id="fig|572264.18.peg.4362"/>
<dbReference type="Proteomes" id="UP000002210">
    <property type="component" value="Chromosome"/>
</dbReference>
<dbReference type="GO" id="GO:0005737">
    <property type="term" value="C:cytoplasm"/>
    <property type="evidence" value="ECO:0007669"/>
    <property type="project" value="UniProtKB-SubCell"/>
</dbReference>
<dbReference type="GO" id="GO:0004222">
    <property type="term" value="F:metalloendopeptidase activity"/>
    <property type="evidence" value="ECO:0007669"/>
    <property type="project" value="InterPro"/>
</dbReference>
<dbReference type="GO" id="GO:0004521">
    <property type="term" value="F:RNA endonuclease activity"/>
    <property type="evidence" value="ECO:0007669"/>
    <property type="project" value="UniProtKB-UniRule"/>
</dbReference>
<dbReference type="GO" id="GO:0008270">
    <property type="term" value="F:zinc ion binding"/>
    <property type="evidence" value="ECO:0007669"/>
    <property type="project" value="UniProtKB-UniRule"/>
</dbReference>
<dbReference type="GO" id="GO:0006364">
    <property type="term" value="P:rRNA processing"/>
    <property type="evidence" value="ECO:0007669"/>
    <property type="project" value="UniProtKB-UniRule"/>
</dbReference>
<dbReference type="Gene3D" id="3.40.390.30">
    <property type="entry name" value="Metalloproteases ('zincins'), catalytic domain"/>
    <property type="match status" value="1"/>
</dbReference>
<dbReference type="HAMAP" id="MF_00009">
    <property type="entry name" value="Endoribonucl_YbeY"/>
    <property type="match status" value="1"/>
</dbReference>
<dbReference type="InterPro" id="IPR023091">
    <property type="entry name" value="MetalPrtase_cat_dom_sf_prd"/>
</dbReference>
<dbReference type="InterPro" id="IPR002036">
    <property type="entry name" value="YbeY"/>
</dbReference>
<dbReference type="InterPro" id="IPR020549">
    <property type="entry name" value="YbeY_CS"/>
</dbReference>
<dbReference type="NCBIfam" id="TIGR00043">
    <property type="entry name" value="rRNA maturation RNase YbeY"/>
    <property type="match status" value="1"/>
</dbReference>
<dbReference type="PANTHER" id="PTHR46986">
    <property type="entry name" value="ENDORIBONUCLEASE YBEY, CHLOROPLASTIC"/>
    <property type="match status" value="1"/>
</dbReference>
<dbReference type="PANTHER" id="PTHR46986:SF1">
    <property type="entry name" value="ENDORIBONUCLEASE YBEY, CHLOROPLASTIC"/>
    <property type="match status" value="1"/>
</dbReference>
<dbReference type="Pfam" id="PF02130">
    <property type="entry name" value="YbeY"/>
    <property type="match status" value="1"/>
</dbReference>
<dbReference type="SUPFAM" id="SSF55486">
    <property type="entry name" value="Metalloproteases ('zincins'), catalytic domain"/>
    <property type="match status" value="1"/>
</dbReference>
<dbReference type="PROSITE" id="PS01306">
    <property type="entry name" value="UPF0054"/>
    <property type="match status" value="1"/>
</dbReference>
<feature type="chain" id="PRO_1000199948" description="Endoribonuclease YbeY">
    <location>
        <begin position="1"/>
        <end position="156"/>
    </location>
</feature>
<feature type="binding site" evidence="1">
    <location>
        <position position="122"/>
    </location>
    <ligand>
        <name>Zn(2+)</name>
        <dbReference type="ChEBI" id="CHEBI:29105"/>
        <note>catalytic</note>
    </ligand>
</feature>
<feature type="binding site" evidence="1">
    <location>
        <position position="126"/>
    </location>
    <ligand>
        <name>Zn(2+)</name>
        <dbReference type="ChEBI" id="CHEBI:29105"/>
        <note>catalytic</note>
    </ligand>
</feature>
<feature type="binding site" evidence="1">
    <location>
        <position position="132"/>
    </location>
    <ligand>
        <name>Zn(2+)</name>
        <dbReference type="ChEBI" id="CHEBI:29105"/>
        <note>catalytic</note>
    </ligand>
</feature>
<accession>C1ESJ7</accession>
<comment type="function">
    <text evidence="1">Single strand-specific metallo-endoribonuclease involved in late-stage 70S ribosome quality control and in maturation of the 3' terminus of the 16S rRNA.</text>
</comment>
<comment type="cofactor">
    <cofactor evidence="1">
        <name>Zn(2+)</name>
        <dbReference type="ChEBI" id="CHEBI:29105"/>
    </cofactor>
    <text evidence="1">Binds 1 zinc ion.</text>
</comment>
<comment type="subcellular location">
    <subcellularLocation>
        <location evidence="1">Cytoplasm</location>
    </subcellularLocation>
</comment>
<comment type="similarity">
    <text evidence="1">Belongs to the endoribonuclease YbeY family.</text>
</comment>
<sequence length="156" mass="18062">MSLLIDFIDETEEVKEEYVNLIREILGKAAQMEKIEDGAELSVTFVDNERIREINRDYRDKDQPTDVISFAMEEMGEGEMEIVGVEMPRMLGDLIISIPRAKEQAEEYGHSFDRELGFLALHGFLHLLGYDHMTEEDEKEMFGRQKEILEAFGLGR</sequence>
<name>YBEY_BACC3</name>
<keyword id="KW-0963">Cytoplasm</keyword>
<keyword id="KW-0255">Endonuclease</keyword>
<keyword id="KW-0378">Hydrolase</keyword>
<keyword id="KW-0479">Metal-binding</keyword>
<keyword id="KW-0540">Nuclease</keyword>
<keyword id="KW-0690">Ribosome biogenesis</keyword>
<keyword id="KW-0698">rRNA processing</keyword>
<keyword id="KW-0862">Zinc</keyword>
<evidence type="ECO:0000255" key="1">
    <source>
        <dbReference type="HAMAP-Rule" id="MF_00009"/>
    </source>
</evidence>
<organism>
    <name type="scientific">Bacillus cereus (strain 03BB102)</name>
    <dbReference type="NCBI Taxonomy" id="572264"/>
    <lineage>
        <taxon>Bacteria</taxon>
        <taxon>Bacillati</taxon>
        <taxon>Bacillota</taxon>
        <taxon>Bacilli</taxon>
        <taxon>Bacillales</taxon>
        <taxon>Bacillaceae</taxon>
        <taxon>Bacillus</taxon>
        <taxon>Bacillus cereus group</taxon>
    </lineage>
</organism>